<comment type="function">
    <text evidence="2">Key calcium ion sensor involved in the Ca(2+)-triggered synaptic vesicle-plasma membrane fusion and in the control of neurotransmitter release at these output synapses. Interacts in a calcium-dependent manner to the presynaptic SNARE proteins at ribbon synapses of cochlear inner hair cells (IHCs) to trigger exocytosis of neurotransmitter. Also essential to synaptic exocytosis in immature outer hair cells (OHCs). May also play a role within the recycling of endosomes (By similarity).</text>
</comment>
<comment type="cofactor">
    <cofactor evidence="4">
        <name>Ca(2+)</name>
        <dbReference type="ChEBI" id="CHEBI:29108"/>
    </cofactor>
    <text evidence="1">Binds Ca(2+). The ions are bound to the C2 1 domain.</text>
</comment>
<comment type="subunit">
    <text evidence="1">Interacts with SNAP25; the interaction is direct. Interacts with STX1; the interaction is direct. Interacts with RAB8B (By similarity).</text>
</comment>
<comment type="subcellular location">
    <subcellularLocation>
        <location evidence="2">Cytoplasmic vesicle</location>
        <location evidence="2">Secretory vesicle</location>
        <location evidence="2">Synaptic vesicle membrane</location>
        <topology evidence="2">Single-pass type II membrane protein</topology>
    </subcellularLocation>
    <subcellularLocation>
        <location evidence="2">Basolateral cell membrane</location>
        <topology evidence="2">Single-pass type II membrane protein</topology>
    </subcellularLocation>
    <subcellularLocation>
        <location evidence="2">Endoplasmic reticulum membrane</location>
        <topology evidence="2">Single-pass type II membrane protein</topology>
    </subcellularLocation>
    <subcellularLocation>
        <location evidence="2">Golgi apparatus membrane</location>
        <topology evidence="2">Single-pass type II membrane protein</topology>
    </subcellularLocation>
    <subcellularLocation>
        <location evidence="2">Presynaptic cell membrane</location>
        <topology evidence="2">Single-pass type II membrane protein</topology>
    </subcellularLocation>
    <subcellularLocation>
        <location evidence="2">Cell membrane</location>
        <topology evidence="2">Single-pass type II membrane protein</topology>
    </subcellularLocation>
    <text evidence="2">Detected at basolateral cell membrane with synaptic vesicles surrounding the ribbon and at the presynaptic plasma membrane in the inner hair cells (IHCs) at postnatal day 30 (P30). Colocalizes with GPR25 and RAB8B in inner hair cells.</text>
</comment>
<comment type="tissue specificity">
    <text evidence="6 7">Isoform 1 is expressed in the cochlea and brain. Expressed in cerebellum (Purkinje cells), hippocampus (granule cells of the dentate gyrus and in pyramidal cells of the CA1-CA3 region) and cortex (stellate and pyramidal cells). Expressed in hair cells of vestibular organs such as the saccule, utricle and crista ampullari. Expressed in the cochlear inner and outer cells (IHCs and OHCs) (at protein level). Expressed in brain: brainstem, cerebellum (granules cells and Purkinje cell layer), cortex (layers IV and V), inferior colliculus, superior colliculus and hippocampus (granule cells of the dentate gyrus and in pyramidal cells of the CA1-CA3 region).</text>
</comment>
<comment type="domain">
    <text evidence="8">The N-terminal first 124 residues can be classified as C2 domain, based on their 3D-structure. They are not sufficient for calcium ion or phospholipid binding.</text>
</comment>
<comment type="similarity">
    <text evidence="9">Belongs to the ferlin family.</text>
</comment>
<name>OTOF_RAT</name>
<dbReference type="EMBL" id="AABR03048736">
    <property type="status" value="NOT_ANNOTATED_CDS"/>
    <property type="molecule type" value="Genomic_DNA"/>
</dbReference>
<dbReference type="EMBL" id="AABR03049539">
    <property type="status" value="NOT_ANNOTATED_CDS"/>
    <property type="molecule type" value="Genomic_DNA"/>
</dbReference>
<dbReference type="EMBL" id="AF315944">
    <property type="protein sequence ID" value="AAG30298.1"/>
    <property type="molecule type" value="mRNA"/>
</dbReference>
<dbReference type="RefSeq" id="XP_006239895.1">
    <property type="nucleotide sequence ID" value="XM_006239833.4"/>
</dbReference>
<dbReference type="PDB" id="3L9B">
    <property type="method" value="X-ray"/>
    <property type="resolution" value="1.95 A"/>
    <property type="chains" value="A=1-124"/>
</dbReference>
<dbReference type="PDBsum" id="3L9B"/>
<dbReference type="SMR" id="Q9ERC5"/>
<dbReference type="FunCoup" id="Q9ERC5">
    <property type="interactions" value="19"/>
</dbReference>
<dbReference type="STRING" id="10116.ENSRNOP00000074490"/>
<dbReference type="iPTMnet" id="Q9ERC5"/>
<dbReference type="PhosphoSitePlus" id="Q9ERC5"/>
<dbReference type="PaxDb" id="10116-ENSRNOP00000046997"/>
<dbReference type="Ensembl" id="ENSRNOT00000044278.5">
    <property type="protein sequence ID" value="ENSRNOP00000046997.2"/>
    <property type="gene ID" value="ENSRNOG00000009967.7"/>
</dbReference>
<dbReference type="GeneID" id="84573"/>
<dbReference type="AGR" id="RGD:620646"/>
<dbReference type="CTD" id="9381"/>
<dbReference type="RGD" id="620646">
    <property type="gene designation" value="Otof"/>
</dbReference>
<dbReference type="eggNOG" id="KOG1326">
    <property type="taxonomic scope" value="Eukaryota"/>
</dbReference>
<dbReference type="GeneTree" id="ENSGT00940000155086"/>
<dbReference type="HOGENOM" id="CLU_001183_3_1_1"/>
<dbReference type="InParanoid" id="Q9ERC5"/>
<dbReference type="OrthoDB" id="270970at2759"/>
<dbReference type="EvolutionaryTrace" id="Q9ERC5"/>
<dbReference type="PRO" id="PR:Q9ERC5"/>
<dbReference type="Proteomes" id="UP000002494">
    <property type="component" value="Chromosome 6"/>
</dbReference>
<dbReference type="Bgee" id="ENSRNOG00000009967">
    <property type="expression patterns" value="Expressed in frontal cortex and 1 other cell type or tissue"/>
</dbReference>
<dbReference type="ExpressionAtlas" id="Q9ERC5">
    <property type="expression patterns" value="baseline and differential"/>
</dbReference>
<dbReference type="GO" id="GO:0045177">
    <property type="term" value="C:apical part of cell"/>
    <property type="evidence" value="ECO:0000314"/>
    <property type="project" value="RGD"/>
</dbReference>
<dbReference type="GO" id="GO:0045178">
    <property type="term" value="C:basal part of cell"/>
    <property type="evidence" value="ECO:0000314"/>
    <property type="project" value="RGD"/>
</dbReference>
<dbReference type="GO" id="GO:0016323">
    <property type="term" value="C:basolateral plasma membrane"/>
    <property type="evidence" value="ECO:0007669"/>
    <property type="project" value="UniProtKB-SubCell"/>
</dbReference>
<dbReference type="GO" id="GO:0042995">
    <property type="term" value="C:cell projection"/>
    <property type="evidence" value="ECO:0007669"/>
    <property type="project" value="UniProtKB-KW"/>
</dbReference>
<dbReference type="GO" id="GO:0098683">
    <property type="term" value="C:cochlear hair cell ribbon synapse"/>
    <property type="evidence" value="ECO:0000266"/>
    <property type="project" value="RGD"/>
</dbReference>
<dbReference type="GO" id="GO:0005783">
    <property type="term" value="C:endoplasmic reticulum"/>
    <property type="evidence" value="ECO:0000266"/>
    <property type="project" value="RGD"/>
</dbReference>
<dbReference type="GO" id="GO:0005789">
    <property type="term" value="C:endoplasmic reticulum membrane"/>
    <property type="evidence" value="ECO:0007669"/>
    <property type="project" value="UniProtKB-SubCell"/>
</dbReference>
<dbReference type="GO" id="GO:0000139">
    <property type="term" value="C:Golgi membrane"/>
    <property type="evidence" value="ECO:0007669"/>
    <property type="project" value="UniProtKB-SubCell"/>
</dbReference>
<dbReference type="GO" id="GO:0048787">
    <property type="term" value="C:presynaptic active zone membrane"/>
    <property type="evidence" value="ECO:0000266"/>
    <property type="project" value="RGD"/>
</dbReference>
<dbReference type="GO" id="GO:0030672">
    <property type="term" value="C:synaptic vesicle membrane"/>
    <property type="evidence" value="ECO:0000250"/>
    <property type="project" value="UniProtKB"/>
</dbReference>
<dbReference type="GO" id="GO:0035612">
    <property type="term" value="F:AP-2 adaptor complex binding"/>
    <property type="evidence" value="ECO:0000266"/>
    <property type="project" value="RGD"/>
</dbReference>
<dbReference type="GO" id="GO:0005509">
    <property type="term" value="F:calcium ion binding"/>
    <property type="evidence" value="ECO:0000250"/>
    <property type="project" value="UniProtKB"/>
</dbReference>
<dbReference type="GO" id="GO:0044877">
    <property type="term" value="F:protein-containing complex binding"/>
    <property type="evidence" value="ECO:0000353"/>
    <property type="project" value="RGD"/>
</dbReference>
<dbReference type="GO" id="GO:0090102">
    <property type="term" value="P:cochlea development"/>
    <property type="evidence" value="ECO:0000270"/>
    <property type="project" value="RGD"/>
</dbReference>
<dbReference type="GO" id="GO:0007009">
    <property type="term" value="P:plasma membrane organization"/>
    <property type="evidence" value="ECO:0000318"/>
    <property type="project" value="GO_Central"/>
</dbReference>
<dbReference type="GO" id="GO:0007605">
    <property type="term" value="P:sensory perception of sound"/>
    <property type="evidence" value="ECO:0007669"/>
    <property type="project" value="UniProtKB-KW"/>
</dbReference>
<dbReference type="GO" id="GO:0016079">
    <property type="term" value="P:synaptic vesicle exocytosis"/>
    <property type="evidence" value="ECO:0000250"/>
    <property type="project" value="UniProtKB"/>
</dbReference>
<dbReference type="GO" id="GO:0016082">
    <property type="term" value="P:synaptic vesicle priming"/>
    <property type="evidence" value="ECO:0000266"/>
    <property type="project" value="RGD"/>
</dbReference>
<dbReference type="GO" id="GO:0036465">
    <property type="term" value="P:synaptic vesicle recycling"/>
    <property type="evidence" value="ECO:0000318"/>
    <property type="project" value="GO_Central"/>
</dbReference>
<dbReference type="CDD" id="cd08373">
    <property type="entry name" value="C2A_Ferlin"/>
    <property type="match status" value="1"/>
</dbReference>
<dbReference type="CDD" id="cd04011">
    <property type="entry name" value="C2B_Ferlin"/>
    <property type="match status" value="1"/>
</dbReference>
<dbReference type="CDD" id="cd04018">
    <property type="entry name" value="C2C_Ferlin"/>
    <property type="match status" value="1"/>
</dbReference>
<dbReference type="CDD" id="cd04017">
    <property type="entry name" value="C2D_Ferlin"/>
    <property type="match status" value="1"/>
</dbReference>
<dbReference type="CDD" id="cd04037">
    <property type="entry name" value="C2E_Ferlin"/>
    <property type="match status" value="1"/>
</dbReference>
<dbReference type="CDD" id="cd08374">
    <property type="entry name" value="C2F_Ferlin"/>
    <property type="match status" value="1"/>
</dbReference>
<dbReference type="FunFam" id="2.60.40.150:FF:000009">
    <property type="entry name" value="dysferlin isoform X2"/>
    <property type="match status" value="1"/>
</dbReference>
<dbReference type="FunFam" id="2.60.40.150:FF:000081">
    <property type="entry name" value="otoferlin isoform X1"/>
    <property type="match status" value="1"/>
</dbReference>
<dbReference type="FunFam" id="2.60.40.150:FF:000089">
    <property type="entry name" value="otoferlin isoform X1"/>
    <property type="match status" value="1"/>
</dbReference>
<dbReference type="FunFam" id="2.60.40.150:FF:000118">
    <property type="entry name" value="otoferlin isoform X1"/>
    <property type="match status" value="1"/>
</dbReference>
<dbReference type="FunFam" id="2.60.40.150:FF:000034">
    <property type="entry name" value="otoferlin isoform X2"/>
    <property type="match status" value="1"/>
</dbReference>
<dbReference type="FunFam" id="2.60.40.150:FF:000054">
    <property type="entry name" value="otoferlin isoform X2"/>
    <property type="match status" value="1"/>
</dbReference>
<dbReference type="Gene3D" id="2.60.40.150">
    <property type="entry name" value="C2 domain"/>
    <property type="match status" value="6"/>
</dbReference>
<dbReference type="InterPro" id="IPR000008">
    <property type="entry name" value="C2_dom"/>
</dbReference>
<dbReference type="InterPro" id="IPR035892">
    <property type="entry name" value="C2_domain_sf"/>
</dbReference>
<dbReference type="InterPro" id="IPR037726">
    <property type="entry name" value="C2A_Ferlin"/>
</dbReference>
<dbReference type="InterPro" id="IPR037720">
    <property type="entry name" value="C2B_Ferlin"/>
</dbReference>
<dbReference type="InterPro" id="IPR037722">
    <property type="entry name" value="C2C_Ferlin"/>
</dbReference>
<dbReference type="InterPro" id="IPR037723">
    <property type="entry name" value="C2D_Ferlin"/>
</dbReference>
<dbReference type="InterPro" id="IPR037724">
    <property type="entry name" value="C2E_Ferlin"/>
</dbReference>
<dbReference type="InterPro" id="IPR037725">
    <property type="entry name" value="C2F_Ferlin"/>
</dbReference>
<dbReference type="InterPro" id="IPR012968">
    <property type="entry name" value="FerIin_dom"/>
</dbReference>
<dbReference type="InterPro" id="IPR037721">
    <property type="entry name" value="Ferlin"/>
</dbReference>
<dbReference type="InterPro" id="IPR012561">
    <property type="entry name" value="Ferlin_B-domain"/>
</dbReference>
<dbReference type="InterPro" id="IPR032362">
    <property type="entry name" value="Ferlin_C"/>
</dbReference>
<dbReference type="InterPro" id="IPR055072">
    <property type="entry name" value="Ferlin_DSRM"/>
</dbReference>
<dbReference type="PANTHER" id="PTHR12546">
    <property type="entry name" value="FER-1-LIKE"/>
    <property type="match status" value="1"/>
</dbReference>
<dbReference type="PANTHER" id="PTHR12546:SF32">
    <property type="entry name" value="OTOFERLIN"/>
    <property type="match status" value="1"/>
</dbReference>
<dbReference type="Pfam" id="PF00168">
    <property type="entry name" value="C2"/>
    <property type="match status" value="6"/>
</dbReference>
<dbReference type="Pfam" id="PF22901">
    <property type="entry name" value="dsrm_Ferlin"/>
    <property type="match status" value="1"/>
</dbReference>
<dbReference type="Pfam" id="PF08150">
    <property type="entry name" value="FerB"/>
    <property type="match status" value="1"/>
</dbReference>
<dbReference type="Pfam" id="PF08151">
    <property type="entry name" value="FerI"/>
    <property type="match status" value="1"/>
</dbReference>
<dbReference type="Pfam" id="PF16165">
    <property type="entry name" value="Ferlin_C"/>
    <property type="match status" value="1"/>
</dbReference>
<dbReference type="PRINTS" id="PR00360">
    <property type="entry name" value="C2DOMAIN"/>
</dbReference>
<dbReference type="SMART" id="SM00239">
    <property type="entry name" value="C2"/>
    <property type="match status" value="6"/>
</dbReference>
<dbReference type="SMART" id="SM01201">
    <property type="entry name" value="FerB"/>
    <property type="match status" value="1"/>
</dbReference>
<dbReference type="SMART" id="SM01202">
    <property type="entry name" value="FerI"/>
    <property type="match status" value="1"/>
</dbReference>
<dbReference type="SUPFAM" id="SSF49562">
    <property type="entry name" value="C2 domain (Calcium/lipid-binding domain, CaLB)"/>
    <property type="match status" value="7"/>
</dbReference>
<dbReference type="PROSITE" id="PS50004">
    <property type="entry name" value="C2"/>
    <property type="match status" value="7"/>
</dbReference>
<organism>
    <name type="scientific">Rattus norvegicus</name>
    <name type="common">Rat</name>
    <dbReference type="NCBI Taxonomy" id="10116"/>
    <lineage>
        <taxon>Eukaryota</taxon>
        <taxon>Metazoa</taxon>
        <taxon>Chordata</taxon>
        <taxon>Craniata</taxon>
        <taxon>Vertebrata</taxon>
        <taxon>Euteleostomi</taxon>
        <taxon>Mammalia</taxon>
        <taxon>Eutheria</taxon>
        <taxon>Euarchontoglires</taxon>
        <taxon>Glires</taxon>
        <taxon>Rodentia</taxon>
        <taxon>Myomorpha</taxon>
        <taxon>Muroidea</taxon>
        <taxon>Muridae</taxon>
        <taxon>Murinae</taxon>
        <taxon>Rattus</taxon>
    </lineage>
</organism>
<feature type="chain" id="PRO_0000057883" description="Otoferlin">
    <location>
        <begin position="1"/>
        <end position="1993"/>
    </location>
</feature>
<feature type="topological domain" description="Cytoplasmic" evidence="3">
    <location>
        <begin position="1"/>
        <end position="1959"/>
    </location>
</feature>
<feature type="transmembrane region" description="Helical" evidence="3">
    <location>
        <begin position="1960"/>
        <end position="1980"/>
    </location>
</feature>
<feature type="topological domain" description="Extracellular" evidence="3">
    <location>
        <begin position="1981"/>
        <end position="1993"/>
    </location>
</feature>
<feature type="domain" description="C2 1" evidence="4">
    <location>
        <begin position="1"/>
        <end position="98"/>
    </location>
</feature>
<feature type="domain" description="C2 2" evidence="4">
    <location>
        <begin position="251"/>
        <end position="372"/>
    </location>
</feature>
<feature type="domain" description="C2 3" evidence="4">
    <location>
        <begin position="415"/>
        <end position="546"/>
    </location>
</feature>
<feature type="domain" description="C2 4" evidence="4">
    <location>
        <begin position="959"/>
        <end position="1084"/>
    </location>
</feature>
<feature type="domain" description="C2 5" evidence="4">
    <location>
        <begin position="1131"/>
        <end position="1257"/>
    </location>
</feature>
<feature type="domain" description="C2 6" evidence="4">
    <location>
        <begin position="1460"/>
        <end position="1589"/>
    </location>
</feature>
<feature type="domain" description="C2 7" evidence="4">
    <location>
        <begin position="1710"/>
        <end position="1861"/>
    </location>
</feature>
<feature type="region of interest" description="Disordered" evidence="5">
    <location>
        <begin position="127"/>
        <end position="212"/>
    </location>
</feature>
<feature type="region of interest" description="Disordered" evidence="5">
    <location>
        <begin position="654"/>
        <end position="708"/>
    </location>
</feature>
<feature type="region of interest" description="Disordered" evidence="5">
    <location>
        <begin position="1294"/>
        <end position="1318"/>
    </location>
</feature>
<feature type="region of interest" description="Disordered" evidence="5">
    <location>
        <begin position="1339"/>
        <end position="1398"/>
    </location>
</feature>
<feature type="coiled-coil region" evidence="3">
    <location>
        <begin position="807"/>
        <end position="836"/>
    </location>
</feature>
<feature type="compositionally biased region" description="Acidic residues" evidence="5">
    <location>
        <begin position="129"/>
        <end position="145"/>
    </location>
</feature>
<feature type="compositionally biased region" description="Basic and acidic residues" evidence="5">
    <location>
        <begin position="163"/>
        <end position="186"/>
    </location>
</feature>
<feature type="compositionally biased region" description="Basic and acidic residues" evidence="5">
    <location>
        <begin position="202"/>
        <end position="211"/>
    </location>
</feature>
<feature type="compositionally biased region" description="Acidic residues" evidence="5">
    <location>
        <begin position="675"/>
        <end position="695"/>
    </location>
</feature>
<feature type="compositionally biased region" description="Acidic residues" evidence="5">
    <location>
        <begin position="1348"/>
        <end position="1357"/>
    </location>
</feature>
<feature type="compositionally biased region" description="Basic and acidic residues" evidence="5">
    <location>
        <begin position="1366"/>
        <end position="1379"/>
    </location>
</feature>
<feature type="binding site" evidence="4">
    <location>
        <position position="991"/>
    </location>
    <ligand>
        <name>Ca(2+)</name>
        <dbReference type="ChEBI" id="CHEBI:29108"/>
        <label>1</label>
    </ligand>
</feature>
<feature type="binding site" evidence="4">
    <location>
        <position position="991"/>
    </location>
    <ligand>
        <name>Ca(2+)</name>
        <dbReference type="ChEBI" id="CHEBI:29108"/>
        <label>2</label>
    </ligand>
</feature>
<feature type="binding site" evidence="4">
    <location>
        <position position="997"/>
    </location>
    <ligand>
        <name>Ca(2+)</name>
        <dbReference type="ChEBI" id="CHEBI:29108"/>
        <label>1</label>
    </ligand>
</feature>
<feature type="binding site" evidence="4">
    <location>
        <position position="1053"/>
    </location>
    <ligand>
        <name>Ca(2+)</name>
        <dbReference type="ChEBI" id="CHEBI:29108"/>
        <label>1</label>
    </ligand>
</feature>
<feature type="binding site" evidence="4">
    <location>
        <position position="1053"/>
    </location>
    <ligand>
        <name>Ca(2+)</name>
        <dbReference type="ChEBI" id="CHEBI:29108"/>
        <label>2</label>
    </ligand>
</feature>
<feature type="binding site" evidence="4">
    <location>
        <position position="1055"/>
    </location>
    <ligand>
        <name>Ca(2+)</name>
        <dbReference type="ChEBI" id="CHEBI:29108"/>
        <label>1</label>
    </ligand>
</feature>
<feature type="binding site" evidence="4">
    <location>
        <position position="1055"/>
    </location>
    <ligand>
        <name>Ca(2+)</name>
        <dbReference type="ChEBI" id="CHEBI:29108"/>
        <label>2</label>
    </ligand>
</feature>
<feature type="binding site" evidence="4">
    <location>
        <position position="1061"/>
    </location>
    <ligand>
        <name>Ca(2+)</name>
        <dbReference type="ChEBI" id="CHEBI:29108"/>
        <label>2</label>
    </ligand>
</feature>
<feature type="binding site" evidence="4">
    <location>
        <position position="1504"/>
    </location>
    <ligand>
        <name>Ca(2+)</name>
        <dbReference type="ChEBI" id="CHEBI:29108"/>
        <label>3</label>
    </ligand>
</feature>
<feature type="binding site" evidence="4">
    <location>
        <position position="1504"/>
    </location>
    <ligand>
        <name>Ca(2+)</name>
        <dbReference type="ChEBI" id="CHEBI:29108"/>
        <label>4</label>
    </ligand>
</feature>
<feature type="binding site" evidence="4">
    <location>
        <position position="1510"/>
    </location>
    <ligand>
        <name>Ca(2+)</name>
        <dbReference type="ChEBI" id="CHEBI:29108"/>
        <label>3</label>
    </ligand>
</feature>
<feature type="binding site" evidence="4">
    <location>
        <position position="1559"/>
    </location>
    <ligand>
        <name>Ca(2+)</name>
        <dbReference type="ChEBI" id="CHEBI:29108"/>
        <label>3</label>
    </ligand>
</feature>
<feature type="binding site" evidence="4">
    <location>
        <position position="1559"/>
    </location>
    <ligand>
        <name>Ca(2+)</name>
        <dbReference type="ChEBI" id="CHEBI:29108"/>
        <label>4</label>
    </ligand>
</feature>
<feature type="binding site" evidence="4">
    <location>
        <position position="1561"/>
    </location>
    <ligand>
        <name>Ca(2+)</name>
        <dbReference type="ChEBI" id="CHEBI:29108"/>
        <label>3</label>
    </ligand>
</feature>
<feature type="binding site" evidence="4">
    <location>
        <position position="1561"/>
    </location>
    <ligand>
        <name>Ca(2+)</name>
        <dbReference type="ChEBI" id="CHEBI:29108"/>
        <label>4</label>
    </ligand>
</feature>
<feature type="binding site" evidence="4">
    <location>
        <position position="1567"/>
    </location>
    <ligand>
        <name>Ca(2+)</name>
        <dbReference type="ChEBI" id="CHEBI:29108"/>
        <label>4</label>
    </ligand>
</feature>
<feature type="binding site" evidence="4">
    <location>
        <position position="1832"/>
    </location>
    <ligand>
        <name>Ca(2+)</name>
        <dbReference type="ChEBI" id="CHEBI:29108"/>
        <label>5</label>
    </ligand>
</feature>
<feature type="binding site" evidence="4">
    <location>
        <position position="1835"/>
    </location>
    <ligand>
        <name>Ca(2+)</name>
        <dbReference type="ChEBI" id="CHEBI:29108"/>
        <label>5</label>
    </ligand>
</feature>
<feature type="binding site" evidence="4">
    <location>
        <position position="1838"/>
    </location>
    <ligand>
        <name>Ca(2+)</name>
        <dbReference type="ChEBI" id="CHEBI:29108"/>
        <label>5</label>
    </ligand>
</feature>
<feature type="sequence conflict" description="In Ref. 2; AAG30298." evidence="9" ref="2">
    <original>H</original>
    <variation>P</variation>
    <location>
        <position position="1629"/>
    </location>
</feature>
<feature type="sequence conflict" description="In Ref. 2; AAG30298." evidence="9" ref="2">
    <original>F</original>
    <variation>C</variation>
    <location>
        <position position="1811"/>
    </location>
</feature>
<feature type="strand" evidence="10">
    <location>
        <begin position="1"/>
        <end position="12"/>
    </location>
</feature>
<feature type="strand" evidence="10">
    <location>
        <begin position="17"/>
        <end position="25"/>
    </location>
</feature>
<feature type="strand" evidence="10">
    <location>
        <begin position="28"/>
        <end position="31"/>
    </location>
</feature>
<feature type="strand" evidence="10">
    <location>
        <begin position="35"/>
        <end position="38"/>
    </location>
</feature>
<feature type="strand" evidence="10">
    <location>
        <begin position="42"/>
        <end position="54"/>
    </location>
</feature>
<feature type="strand" evidence="10">
    <location>
        <begin position="61"/>
        <end position="69"/>
    </location>
</feature>
<feature type="strand" evidence="10">
    <location>
        <begin position="76"/>
        <end position="85"/>
    </location>
</feature>
<feature type="helix" evidence="10">
    <location>
        <begin position="86"/>
        <end position="91"/>
    </location>
</feature>
<feature type="strand" evidence="10">
    <location>
        <begin position="92"/>
        <end position="101"/>
    </location>
</feature>
<feature type="strand" evidence="10">
    <location>
        <begin position="107"/>
        <end position="120"/>
    </location>
</feature>
<protein>
    <recommendedName>
        <fullName>Otoferlin</fullName>
    </recommendedName>
    <alternativeName>
        <fullName>Fer-1-like protein 2</fullName>
    </alternativeName>
</protein>
<reference key="1">
    <citation type="journal article" date="2004" name="Nature">
        <title>Genome sequence of the Brown Norway rat yields insights into mammalian evolution.</title>
        <authorList>
            <person name="Gibbs R.A."/>
            <person name="Weinstock G.M."/>
            <person name="Metzker M.L."/>
            <person name="Muzny D.M."/>
            <person name="Sodergren E.J."/>
            <person name="Scherer S."/>
            <person name="Scott G."/>
            <person name="Steffen D."/>
            <person name="Worley K.C."/>
            <person name="Burch P.E."/>
            <person name="Okwuonu G."/>
            <person name="Hines S."/>
            <person name="Lewis L."/>
            <person name="Deramo C."/>
            <person name="Delgado O."/>
            <person name="Dugan-Rocha S."/>
            <person name="Miner G."/>
            <person name="Morgan M."/>
            <person name="Hawes A."/>
            <person name="Gill R."/>
            <person name="Holt R.A."/>
            <person name="Adams M.D."/>
            <person name="Amanatides P.G."/>
            <person name="Baden-Tillson H."/>
            <person name="Barnstead M."/>
            <person name="Chin S."/>
            <person name="Evans C.A."/>
            <person name="Ferriera S."/>
            <person name="Fosler C."/>
            <person name="Glodek A."/>
            <person name="Gu Z."/>
            <person name="Jennings D."/>
            <person name="Kraft C.L."/>
            <person name="Nguyen T."/>
            <person name="Pfannkoch C.M."/>
            <person name="Sitter C."/>
            <person name="Sutton G.G."/>
            <person name="Venter J.C."/>
            <person name="Woodage T."/>
            <person name="Smith D."/>
            <person name="Lee H.-M."/>
            <person name="Gustafson E."/>
            <person name="Cahill P."/>
            <person name="Kana A."/>
            <person name="Doucette-Stamm L."/>
            <person name="Weinstock K."/>
            <person name="Fechtel K."/>
            <person name="Weiss R.B."/>
            <person name="Dunn D.M."/>
            <person name="Green E.D."/>
            <person name="Blakesley R.W."/>
            <person name="Bouffard G.G."/>
            <person name="De Jong P.J."/>
            <person name="Osoegawa K."/>
            <person name="Zhu B."/>
            <person name="Marra M."/>
            <person name="Schein J."/>
            <person name="Bosdet I."/>
            <person name="Fjell C."/>
            <person name="Jones S."/>
            <person name="Krzywinski M."/>
            <person name="Mathewson C."/>
            <person name="Siddiqui A."/>
            <person name="Wye N."/>
            <person name="McPherson J."/>
            <person name="Zhao S."/>
            <person name="Fraser C.M."/>
            <person name="Shetty J."/>
            <person name="Shatsman S."/>
            <person name="Geer K."/>
            <person name="Chen Y."/>
            <person name="Abramzon S."/>
            <person name="Nierman W.C."/>
            <person name="Havlak P.H."/>
            <person name="Chen R."/>
            <person name="Durbin K.J."/>
            <person name="Egan A."/>
            <person name="Ren Y."/>
            <person name="Song X.-Z."/>
            <person name="Li B."/>
            <person name="Liu Y."/>
            <person name="Qin X."/>
            <person name="Cawley S."/>
            <person name="Cooney A.J."/>
            <person name="D'Souza L.M."/>
            <person name="Martin K."/>
            <person name="Wu J.Q."/>
            <person name="Gonzalez-Garay M.L."/>
            <person name="Jackson A.R."/>
            <person name="Kalafus K.J."/>
            <person name="McLeod M.P."/>
            <person name="Milosavljevic A."/>
            <person name="Virk D."/>
            <person name="Volkov A."/>
            <person name="Wheeler D.A."/>
            <person name="Zhang Z."/>
            <person name="Bailey J.A."/>
            <person name="Eichler E.E."/>
            <person name="Tuzun E."/>
            <person name="Birney E."/>
            <person name="Mongin E."/>
            <person name="Ureta-Vidal A."/>
            <person name="Woodwark C."/>
            <person name="Zdobnov E."/>
            <person name="Bork P."/>
            <person name="Suyama M."/>
            <person name="Torrents D."/>
            <person name="Alexandersson M."/>
            <person name="Trask B.J."/>
            <person name="Young J.M."/>
            <person name="Huang H."/>
            <person name="Wang H."/>
            <person name="Xing H."/>
            <person name="Daniels S."/>
            <person name="Gietzen D."/>
            <person name="Schmidt J."/>
            <person name="Stevens K."/>
            <person name="Vitt U."/>
            <person name="Wingrove J."/>
            <person name="Camara F."/>
            <person name="Mar Alba M."/>
            <person name="Abril J.F."/>
            <person name="Guigo R."/>
            <person name="Smit A."/>
            <person name="Dubchak I."/>
            <person name="Rubin E.M."/>
            <person name="Couronne O."/>
            <person name="Poliakov A."/>
            <person name="Huebner N."/>
            <person name="Ganten D."/>
            <person name="Goesele C."/>
            <person name="Hummel O."/>
            <person name="Kreitler T."/>
            <person name="Lee Y.-A."/>
            <person name="Monti J."/>
            <person name="Schulz H."/>
            <person name="Zimdahl H."/>
            <person name="Himmelbauer H."/>
            <person name="Lehrach H."/>
            <person name="Jacob H.J."/>
            <person name="Bromberg S."/>
            <person name="Gullings-Handley J."/>
            <person name="Jensen-Seaman M.I."/>
            <person name="Kwitek A.E."/>
            <person name="Lazar J."/>
            <person name="Pasko D."/>
            <person name="Tonellato P.J."/>
            <person name="Twigger S."/>
            <person name="Ponting C.P."/>
            <person name="Duarte J.M."/>
            <person name="Rice S."/>
            <person name="Goodstadt L."/>
            <person name="Beatson S.A."/>
            <person name="Emes R.D."/>
            <person name="Winter E.E."/>
            <person name="Webber C."/>
            <person name="Brandt P."/>
            <person name="Nyakatura G."/>
            <person name="Adetobi M."/>
            <person name="Chiaromonte F."/>
            <person name="Elnitski L."/>
            <person name="Eswara P."/>
            <person name="Hardison R.C."/>
            <person name="Hou M."/>
            <person name="Kolbe D."/>
            <person name="Makova K."/>
            <person name="Miller W."/>
            <person name="Nekrutenko A."/>
            <person name="Riemer C."/>
            <person name="Schwartz S."/>
            <person name="Taylor J."/>
            <person name="Yang S."/>
            <person name="Zhang Y."/>
            <person name="Lindpaintner K."/>
            <person name="Andrews T.D."/>
            <person name="Caccamo M."/>
            <person name="Clamp M."/>
            <person name="Clarke L."/>
            <person name="Curwen V."/>
            <person name="Durbin R.M."/>
            <person name="Eyras E."/>
            <person name="Searle S.M."/>
            <person name="Cooper G.M."/>
            <person name="Batzoglou S."/>
            <person name="Brudno M."/>
            <person name="Sidow A."/>
            <person name="Stone E.A."/>
            <person name="Payseur B.A."/>
            <person name="Bourque G."/>
            <person name="Lopez-Otin C."/>
            <person name="Puente X.S."/>
            <person name="Chakrabarti K."/>
            <person name="Chatterji S."/>
            <person name="Dewey C."/>
            <person name="Pachter L."/>
            <person name="Bray N."/>
            <person name="Yap V.B."/>
            <person name="Caspi A."/>
            <person name="Tesler G."/>
            <person name="Pevzner P.A."/>
            <person name="Haussler D."/>
            <person name="Roskin K.M."/>
            <person name="Baertsch R."/>
            <person name="Clawson H."/>
            <person name="Furey T.S."/>
            <person name="Hinrichs A.S."/>
            <person name="Karolchik D."/>
            <person name="Kent W.J."/>
            <person name="Rosenbloom K.R."/>
            <person name="Trumbower H."/>
            <person name="Weirauch M."/>
            <person name="Cooper D.N."/>
            <person name="Stenson P.D."/>
            <person name="Ma B."/>
            <person name="Brent M."/>
            <person name="Arumugam M."/>
            <person name="Shteynberg D."/>
            <person name="Copley R.R."/>
            <person name="Taylor M.S."/>
            <person name="Riethman H."/>
            <person name="Mudunuri U."/>
            <person name="Peterson J."/>
            <person name="Guyer M."/>
            <person name="Felsenfeld A."/>
            <person name="Old S."/>
            <person name="Mockrin S."/>
            <person name="Collins F.S."/>
        </authorList>
    </citation>
    <scope>NUCLEOTIDE SEQUENCE [LARGE SCALE GENOMIC DNA]</scope>
    <source>
        <strain>Brown Norway</strain>
    </source>
</reference>
<reference key="2">
    <citation type="submission" date="2000-10" db="EMBL/GenBank/DDBJ databases">
        <title>Dynamic developmental expression of cochlear hair cell genes: prestin and otoferlin.</title>
        <authorList>
            <person name="Beisel K.W."/>
            <person name="Nelson N.C."/>
            <person name="Beisel C.L."/>
            <person name="Delimont D.C."/>
            <person name="He D.Z.Z."/>
            <person name="Fritzsch B."/>
        </authorList>
    </citation>
    <scope>NUCLEOTIDE SEQUENCE [MRNA] OF 1554-1819</scope>
    <source>
        <strain>Sprague-Dawley</strain>
    </source>
</reference>
<reference key="3">
    <citation type="journal article" date="2006" name="Eur. J. Neurosci.">
        <title>Differential expression of otoferlin in brain, vestibular system, immature and mature cochlea of the rat.</title>
        <authorList>
            <person name="Schug N."/>
            <person name="Braig C."/>
            <person name="Zimmermann U."/>
            <person name="Engel J."/>
            <person name="Winter H."/>
            <person name="Ruth P."/>
            <person name="Blin N."/>
            <person name="Pfister M."/>
            <person name="Kalbacher H."/>
            <person name="Knipper M."/>
        </authorList>
    </citation>
    <scope>TISSUE SPECIFICITY</scope>
</reference>
<reference key="4">
    <citation type="journal article" date="2008" name="Hum. Mol. Genet.">
        <title>Rab8b GTPase, a protein transport regulator, is an interacting partner of otoferlin, defective in a human autosomal recessive deafness form.</title>
        <authorList>
            <person name="Heidrych P."/>
            <person name="Zimmermann U."/>
            <person name="Bress A."/>
            <person name="Pusch C.M."/>
            <person name="Ruth P."/>
            <person name="Pfister M."/>
            <person name="Knipper M."/>
            <person name="Blin N."/>
        </authorList>
    </citation>
    <scope>TISSUE SPECIFICITY</scope>
</reference>
<reference key="5">
    <citation type="journal article" date="2011" name="J. Mol. Biol.">
        <title>The crystal structure of the CA domain of otoferlin reveals an unconventional top loop region.</title>
        <authorList>
            <person name="Helfmann S."/>
            <person name="Neumann P."/>
            <person name="Tittmann K."/>
            <person name="Moser T."/>
            <person name="Ficner R."/>
            <person name="Reisinger E."/>
        </authorList>
    </citation>
    <scope>X-RAY CRYSTALLOGRAPHY (1.95 ANGSTROMS) OF 1-124</scope>
    <scope>CIRCULAR DICHROISM</scope>
    <scope>DOMAIN</scope>
</reference>
<keyword id="KW-0002">3D-structure</keyword>
<keyword id="KW-0106">Calcium</keyword>
<keyword id="KW-1003">Cell membrane</keyword>
<keyword id="KW-0966">Cell projection</keyword>
<keyword id="KW-0175">Coiled coil</keyword>
<keyword id="KW-0968">Cytoplasmic vesicle</keyword>
<keyword id="KW-0256">Endoplasmic reticulum</keyword>
<keyword id="KW-0333">Golgi apparatus</keyword>
<keyword id="KW-1009">Hearing</keyword>
<keyword id="KW-0472">Membrane</keyword>
<keyword id="KW-0479">Metal-binding</keyword>
<keyword id="KW-1185">Reference proteome</keyword>
<keyword id="KW-0677">Repeat</keyword>
<keyword id="KW-0735">Signal-anchor</keyword>
<keyword id="KW-0770">Synapse</keyword>
<keyword id="KW-0812">Transmembrane</keyword>
<keyword id="KW-1133">Transmembrane helix</keyword>
<gene>
    <name type="primary">Otof</name>
    <name type="synonym">Fer1l2</name>
</gene>
<evidence type="ECO:0000250" key="1"/>
<evidence type="ECO:0000250" key="2">
    <source>
        <dbReference type="UniProtKB" id="Q9ESF1"/>
    </source>
</evidence>
<evidence type="ECO:0000255" key="3"/>
<evidence type="ECO:0000255" key="4">
    <source>
        <dbReference type="PROSITE-ProRule" id="PRU00041"/>
    </source>
</evidence>
<evidence type="ECO:0000256" key="5">
    <source>
        <dbReference type="SAM" id="MobiDB-lite"/>
    </source>
</evidence>
<evidence type="ECO:0000269" key="6">
    <source>
    </source>
</evidence>
<evidence type="ECO:0000269" key="7">
    <source>
    </source>
</evidence>
<evidence type="ECO:0000269" key="8">
    <source>
    </source>
</evidence>
<evidence type="ECO:0000305" key="9"/>
<evidence type="ECO:0007829" key="10">
    <source>
        <dbReference type="PDB" id="3L9B"/>
    </source>
</evidence>
<sequence length="1993" mass="226339">MALIVHLKTVSELRGRADRIAKVTFRGQSFYSRVLENCEDVADFDETFRWPVASSIDRNEVLEIQIFNYSKVFSNKLIGTFRMVLQKVVEENRVEVSDTLIDDNNAIIKTSLSMEVRYQAADGTVGPWDDGDFLGDESLQEEEKDSQETDGLLPGSRPSTRTPGEKSFRSKGKEKTKGGRDGEHKAGRSVFSAMKLGKTRSHKEEPQRQDEPAVLEMEDLDHLAIRLGDGLDPDSVSLASVTALTSNVSNKRSKPDIKMEPSAGRPMDYQVSITVIEARQLVGLNMDPVVCVEVGDDKKYTSMKESTNCPYYNEYFVFDFHVSPDVMFDKIIKISVIHSKNLLRSGTLVGSFKMDVGTVYSQPEHQFHHKWAILSDPDDISAGLKGYVKCDVAVVGKGDNIKTPHKANETDEDDIEGNLLLPEGVPPERQWARFYVKIYRAEGLPRMNTSLMANVKKAFIGENKDLVDPYVQVFFAGQKGKTSVQKSSYEPLWNEQVVFTDLFPPLCKRMKVQIRDSDKVNDVAIGTHFIDLRKISNDGDKGFLPTLGPAWVNMYGSTRNYTLLDEHQDLNEGLGEGVSFRARLMLGLAVEILDTSNPELTSSTEVQVEQATPVSESCTGRMEEFFLFGAFLEASMIDRKNGDKPVTFEVTIGNYGNEVDGTSRPQRPRPRKEPGDEEEVDLIQNSSDDEGDEAGDLASVSSTPPMRPQITDRNYFHLPYLERKPCIYIKSWWPDQRRRLYNANIMDHIADKLEEGLNDVQEMIKTEKSYPERRLRGVLEELSCGCHRFLSLSDKDQGHSSRTRLDRERLKSCMRELESMGQQAKSLRAQVKRHTVRDKLRLCQNFLQKLRFLADEPQHSIPDVFIWMMSNNKRIAYARVPSKDLLFSIVEEELGKDCAKVKTLFLKLPGKRGFGSAGWTVQAKLELYLWLGLSKQRKDFLCGLPCGFEEVKAAQGLGLHSFPPISLVYTKKQTFQLRAHMYQARSLFAADSTGLSDPFARVFFINQSQCTEVLNETLCPTWDQMLVFDNLELYGEAHELRDDPPIIVIEIYDQDSMGKADFMGRTFAKPLVKMADEAYCPPRFPPQLEYYQIYRGNATAGDLLAAFELLQIGPSGKADLPPINGPVDMDRGPIMPVPVGIRPVLSKYRVEVLFWGLRDLKRVNLAQVDRPRVDIECAGKGVQSSLIHNYKKNPNFNTLVKWFEVDLPENELLHPPLNIRVVDCRAFGRYTLVGSHAVSSLRRFIYRPPDRSAANWNTTGEVVVSMEPEVPVKKLETLVKLDATSDAVVKVDVAEDEKERKKKKKKGPSEEAEEEEPDESMLDWWSKYFASIDTMKEQLRQHETSGIDLEEKEEMDSTEGLKGPVKNKEKSRAAKEEKKKKNQNPGPGQGSEAPEKKKAKIDELKVYPKELESEFDNFEDWLHTFNLLRGKTGDDEDGSTEEERIVGRFKGSLCVYKVPLPEDVSREAGYDPTYGMFQGIPSNDPINVLVRIYVVRATDLHPADINGKADPYIAIKLGKTDIRDKENYISKQLNPVFGKSFDIEASFPMESMLTVAVYDWDLVGTDDLIGETKIDLENRFYSKHRATCGIAQTYSIHGYNIWRDPMKPSQILTRLCKEGKVDGPHFGPHGRVKVANRVFTGPSEIEDENGQRKPTDEHVALSALRHWEDIPRVGCRLVPEHVETRPLLNPDKPGIEQGRLELWVDMFPMDMPAPGTPLDISPRKPKKYELRVIVWNTDEVVLEDDDFFTGEKSSDIFVRGWLKGQQEDKQDTDVHYHSLTGEGNFNWRYLFPFDYLAAEEKIVMSKKESMFSWDETEYKIPARLTLQIWDADHFSADDFLGAIELDLNRFPRGAKTAKQCTMEMATGEVDVPLVSIFKQKRVKGWWPLLARNENDEFELTGKVEAELHLLTAEEAEKNPVGLARNEPDPLEKPNRPDTAFVWFLNPLKSIKYLICTRYKWLIIKIVLALLGLLMLALFLYSLPGYMVKKLLGA</sequence>
<proteinExistence type="evidence at protein level"/>
<accession>Q9ERC5</accession>